<reference key="1">
    <citation type="journal article" date="2005" name="Jpn. Agric. Res. Q.">
        <title>Genome sequence of Xanthomonas oryzae pv. oryzae suggests contribution of large numbers of effector genes and insertion sequences to its race diversity.</title>
        <authorList>
            <person name="Ochiai H."/>
            <person name="Inoue Y."/>
            <person name="Takeya M."/>
            <person name="Sasaki A."/>
            <person name="Kaku H."/>
        </authorList>
    </citation>
    <scope>NUCLEOTIDE SEQUENCE [LARGE SCALE GENOMIC DNA]</scope>
    <source>
        <strain>MAFF 311018</strain>
    </source>
</reference>
<evidence type="ECO:0000255" key="1">
    <source>
        <dbReference type="HAMAP-Rule" id="MF_00455"/>
    </source>
</evidence>
<gene>
    <name evidence="1" type="primary">xylA1</name>
    <name type="ordered locus">XOO2761</name>
    <name type="ordered locus">XOO4160</name>
</gene>
<proteinExistence type="inferred from homology"/>
<organism>
    <name type="scientific">Xanthomonas oryzae pv. oryzae (strain MAFF 311018)</name>
    <dbReference type="NCBI Taxonomy" id="342109"/>
    <lineage>
        <taxon>Bacteria</taxon>
        <taxon>Pseudomonadati</taxon>
        <taxon>Pseudomonadota</taxon>
        <taxon>Gammaproteobacteria</taxon>
        <taxon>Lysobacterales</taxon>
        <taxon>Lysobacteraceae</taxon>
        <taxon>Xanthomonas</taxon>
    </lineage>
</organism>
<dbReference type="EC" id="5.3.1.5" evidence="1"/>
<dbReference type="EMBL" id="AP008229">
    <property type="protein sequence ID" value="BAE70915.1"/>
    <property type="molecule type" value="Genomic_DNA"/>
</dbReference>
<dbReference type="EMBL" id="AP008229">
    <property type="protein sequence ID" value="BAE69516.1"/>
    <property type="molecule type" value="Genomic_DNA"/>
</dbReference>
<dbReference type="SMR" id="Q2NXR2"/>
<dbReference type="KEGG" id="xom:XOO2761"/>
<dbReference type="KEGG" id="xom:XOO4160"/>
<dbReference type="HOGENOM" id="CLU_037261_1_0_6"/>
<dbReference type="GO" id="GO:0005737">
    <property type="term" value="C:cytoplasm"/>
    <property type="evidence" value="ECO:0007669"/>
    <property type="project" value="UniProtKB-SubCell"/>
</dbReference>
<dbReference type="GO" id="GO:0000287">
    <property type="term" value="F:magnesium ion binding"/>
    <property type="evidence" value="ECO:0007669"/>
    <property type="project" value="UniProtKB-UniRule"/>
</dbReference>
<dbReference type="GO" id="GO:0009045">
    <property type="term" value="F:xylose isomerase activity"/>
    <property type="evidence" value="ECO:0007669"/>
    <property type="project" value="UniProtKB-UniRule"/>
</dbReference>
<dbReference type="GO" id="GO:0042732">
    <property type="term" value="P:D-xylose metabolic process"/>
    <property type="evidence" value="ECO:0007669"/>
    <property type="project" value="UniProtKB-UniRule"/>
</dbReference>
<dbReference type="FunFam" id="3.20.20.150:FF:000002">
    <property type="entry name" value="Xylose isomerase"/>
    <property type="match status" value="1"/>
</dbReference>
<dbReference type="Gene3D" id="3.20.20.150">
    <property type="entry name" value="Divalent-metal-dependent TIM barrel enzymes"/>
    <property type="match status" value="1"/>
</dbReference>
<dbReference type="HAMAP" id="MF_00455">
    <property type="entry name" value="Xylose_isom_A"/>
    <property type="match status" value="1"/>
</dbReference>
<dbReference type="InterPro" id="IPR036237">
    <property type="entry name" value="Xyl_isomerase-like_sf"/>
</dbReference>
<dbReference type="InterPro" id="IPR013452">
    <property type="entry name" value="Xylose_isom_bac"/>
</dbReference>
<dbReference type="InterPro" id="IPR001998">
    <property type="entry name" value="Xylose_isomerase"/>
</dbReference>
<dbReference type="NCBIfam" id="NF003998">
    <property type="entry name" value="PRK05474.1"/>
    <property type="match status" value="1"/>
</dbReference>
<dbReference type="NCBIfam" id="NF009115">
    <property type="entry name" value="PRK12465.1"/>
    <property type="match status" value="1"/>
</dbReference>
<dbReference type="NCBIfam" id="TIGR02630">
    <property type="entry name" value="xylose_isom_A"/>
    <property type="match status" value="1"/>
</dbReference>
<dbReference type="PANTHER" id="PTHR48408">
    <property type="match status" value="1"/>
</dbReference>
<dbReference type="PANTHER" id="PTHR48408:SF1">
    <property type="entry name" value="XYLOSE ISOMERASE"/>
    <property type="match status" value="1"/>
</dbReference>
<dbReference type="PRINTS" id="PR00688">
    <property type="entry name" value="XYLOSISMRASE"/>
</dbReference>
<dbReference type="SUPFAM" id="SSF51658">
    <property type="entry name" value="Xylose isomerase-like"/>
    <property type="match status" value="1"/>
</dbReference>
<dbReference type="PROSITE" id="PS51415">
    <property type="entry name" value="XYLOSE_ISOMERASE"/>
    <property type="match status" value="1"/>
</dbReference>
<keyword id="KW-0119">Carbohydrate metabolism</keyword>
<keyword id="KW-0963">Cytoplasm</keyword>
<keyword id="KW-0413">Isomerase</keyword>
<keyword id="KW-0460">Magnesium</keyword>
<keyword id="KW-0479">Metal-binding</keyword>
<keyword id="KW-0859">Xylose metabolism</keyword>
<accession>Q2NXR2</accession>
<comment type="catalytic activity">
    <reaction evidence="1">
        <text>alpha-D-xylose = alpha-D-xylulofuranose</text>
        <dbReference type="Rhea" id="RHEA:22816"/>
        <dbReference type="ChEBI" id="CHEBI:28518"/>
        <dbReference type="ChEBI" id="CHEBI:188998"/>
        <dbReference type="EC" id="5.3.1.5"/>
    </reaction>
</comment>
<comment type="cofactor">
    <cofactor evidence="1">
        <name>Mg(2+)</name>
        <dbReference type="ChEBI" id="CHEBI:18420"/>
    </cofactor>
    <text evidence="1">Binds 2 magnesium ions per subunit.</text>
</comment>
<comment type="subunit">
    <text evidence="1">Homotetramer.</text>
</comment>
<comment type="subcellular location">
    <subcellularLocation>
        <location evidence="1">Cytoplasm</location>
    </subcellularLocation>
</comment>
<comment type="similarity">
    <text evidence="1">Belongs to the xylose isomerase family.</text>
</comment>
<protein>
    <recommendedName>
        <fullName evidence="1">Xylose isomerase</fullName>
        <ecNumber evidence="1">5.3.1.5</ecNumber>
    </recommendedName>
</protein>
<feature type="chain" id="PRO_0000236980" description="Xylose isomerase">
    <location>
        <begin position="1"/>
        <end position="445"/>
    </location>
</feature>
<feature type="active site" evidence="1">
    <location>
        <position position="109"/>
    </location>
</feature>
<feature type="active site" evidence="1">
    <location>
        <position position="112"/>
    </location>
</feature>
<feature type="binding site" evidence="1">
    <location>
        <position position="240"/>
    </location>
    <ligand>
        <name>Mg(2+)</name>
        <dbReference type="ChEBI" id="CHEBI:18420"/>
        <label>1</label>
    </ligand>
</feature>
<feature type="binding site" evidence="1">
    <location>
        <position position="276"/>
    </location>
    <ligand>
        <name>Mg(2+)</name>
        <dbReference type="ChEBI" id="CHEBI:18420"/>
        <label>1</label>
    </ligand>
</feature>
<feature type="binding site" evidence="1">
    <location>
        <position position="276"/>
    </location>
    <ligand>
        <name>Mg(2+)</name>
        <dbReference type="ChEBI" id="CHEBI:18420"/>
        <label>2</label>
    </ligand>
</feature>
<feature type="binding site" evidence="1">
    <location>
        <position position="279"/>
    </location>
    <ligand>
        <name>Mg(2+)</name>
        <dbReference type="ChEBI" id="CHEBI:18420"/>
        <label>2</label>
    </ligand>
</feature>
<feature type="binding site" evidence="1">
    <location>
        <position position="304"/>
    </location>
    <ligand>
        <name>Mg(2+)</name>
        <dbReference type="ChEBI" id="CHEBI:18420"/>
        <label>1</label>
    </ligand>
</feature>
<feature type="binding site" evidence="1">
    <location>
        <position position="315"/>
    </location>
    <ligand>
        <name>Mg(2+)</name>
        <dbReference type="ChEBI" id="CHEBI:18420"/>
        <label>2</label>
    </ligand>
</feature>
<feature type="binding site" evidence="1">
    <location>
        <position position="317"/>
    </location>
    <ligand>
        <name>Mg(2+)</name>
        <dbReference type="ChEBI" id="CHEBI:18420"/>
        <label>2</label>
    </ligand>
</feature>
<feature type="binding site" evidence="1">
    <location>
        <position position="347"/>
    </location>
    <ligand>
        <name>Mg(2+)</name>
        <dbReference type="ChEBI" id="CHEBI:18420"/>
        <label>1</label>
    </ligand>
</feature>
<sequence length="445" mass="48753">MSNTVYIGAKEYFPGIGKIGFEGRESDNPLAFKVYDANKTIGDKTMAEHLRFAVAYWHSFCGNGADPFGPGTRAYPWDVGNSALARAEAKSDAAFEFFTKLGVPYYCFHDIDLSPDADDIGEYESNLKHMVGVAKQRQADTGIKLLWGTANLFSHPRYMNGASTNPDFNVVARAAVQVKAAIDATVELGGENYVFWGGREGYACLHNTQMKREQDNMARFLTLARDYGRSIGFTGNFLIEPKPMEPMKHQYDFDSATVIGFLRQHGLDQDFKLNIEANHATLSGHSFEHDLQVASDAGLLGSIDANRGNPQNGWDTDQFPTDLYDTVGAMLVVLRQGGLAPGGLNFDAKVRRESSDPQDLFLAHIGGMDAFARGLEVANALLTSSPLEQWRAERYASFDNGTGADFAAGKITLADLAAHAAGNAPKQISGRQEAYENLINQYLTR</sequence>
<name>XYLA_XANOM</name>